<protein>
    <recommendedName>
        <fullName>Putative L,D-transpeptidase YafK</fullName>
        <ecNumber>2.-.-.-</ecNumber>
    </recommendedName>
</protein>
<evidence type="ECO:0000255" key="1"/>
<evidence type="ECO:0000255" key="2">
    <source>
        <dbReference type="PROSITE-ProRule" id="PRU01373"/>
    </source>
</evidence>
<evidence type="ECO:0000305" key="3"/>
<gene>
    <name type="primary">yafK</name>
    <name type="ordered locus">Z0282</name>
    <name type="ordered locus">ECs0251</name>
</gene>
<feature type="signal peptide" evidence="1">
    <location>
        <begin position="1"/>
        <end position="19"/>
    </location>
</feature>
<feature type="chain" id="PRO_0000041955" description="Putative L,D-transpeptidase YafK">
    <location>
        <begin position="20"/>
        <end position="246"/>
    </location>
</feature>
<feature type="domain" description="L,D-TPase catalytic" evidence="2">
    <location>
        <begin position="44"/>
        <end position="174"/>
    </location>
</feature>
<feature type="active site" description="Proton donor/acceptor" evidence="2">
    <location>
        <position position="135"/>
    </location>
</feature>
<feature type="active site" description="Nucleophile" evidence="2">
    <location>
        <position position="143"/>
    </location>
</feature>
<comment type="pathway">
    <text>Cell wall biogenesis; peptidoglycan biosynthesis.</text>
</comment>
<comment type="similarity">
    <text evidence="3">Belongs to the YkuD family.</text>
</comment>
<sequence>MRKIALILAMLLIPCVSFAGLLGSSSSTTPVSKEYKQQLMGSPVYIQIFKEERTLDLYVKMGEQYQLLDSYKICKYSGGLGPKQRQGDFKSPEGFYSVQRNQLKPDSRYYKAINIGFPNAYDRAHGYEGKYLMIHGDCVSIGCYAMTNQGIDEIFQFVTGALVFGQPSVQVSIYPFRMTDANMKRHKYSNFKDFWEQLKPGYDYFEQTRKPPTVSVVNGRYVVSKPLSHEVVQPQLASNYTLPEAK</sequence>
<accession>P0AAA0</accession>
<accession>Q47148</accession>
<name>YAFK_ECO57</name>
<dbReference type="EC" id="2.-.-.-"/>
<dbReference type="EMBL" id="AE005174">
    <property type="protein sequence ID" value="AAG54549.1"/>
    <property type="molecule type" value="Genomic_DNA"/>
</dbReference>
<dbReference type="EMBL" id="BA000007">
    <property type="protein sequence ID" value="BAB33674.1"/>
    <property type="molecule type" value="Genomic_DNA"/>
</dbReference>
<dbReference type="PIR" id="A85511">
    <property type="entry name" value="A85511"/>
</dbReference>
<dbReference type="PIR" id="C90660">
    <property type="entry name" value="C90660"/>
</dbReference>
<dbReference type="RefSeq" id="NP_308278.1">
    <property type="nucleotide sequence ID" value="NC_002695.1"/>
</dbReference>
<dbReference type="SMR" id="P0AAA0"/>
<dbReference type="STRING" id="155864.Z0282"/>
<dbReference type="MEROPS" id="C82.A01"/>
<dbReference type="GeneID" id="914338"/>
<dbReference type="KEGG" id="ece:Z0282"/>
<dbReference type="KEGG" id="ecs:ECs_0251"/>
<dbReference type="PATRIC" id="fig|386585.9.peg.351"/>
<dbReference type="eggNOG" id="COG3034">
    <property type="taxonomic scope" value="Bacteria"/>
</dbReference>
<dbReference type="HOGENOM" id="CLU_032558_2_0_6"/>
<dbReference type="OMA" id="DANMARH"/>
<dbReference type="UniPathway" id="UPA00219"/>
<dbReference type="Proteomes" id="UP000000558">
    <property type="component" value="Chromosome"/>
</dbReference>
<dbReference type="Proteomes" id="UP000002519">
    <property type="component" value="Chromosome"/>
</dbReference>
<dbReference type="GO" id="GO:0004180">
    <property type="term" value="F:carboxypeptidase activity"/>
    <property type="evidence" value="ECO:0007669"/>
    <property type="project" value="UniProtKB-ARBA"/>
</dbReference>
<dbReference type="GO" id="GO:0016757">
    <property type="term" value="F:glycosyltransferase activity"/>
    <property type="evidence" value="ECO:0007669"/>
    <property type="project" value="UniProtKB-KW"/>
</dbReference>
<dbReference type="GO" id="GO:0071555">
    <property type="term" value="P:cell wall organization"/>
    <property type="evidence" value="ECO:0007669"/>
    <property type="project" value="UniProtKB-KW"/>
</dbReference>
<dbReference type="GO" id="GO:0009252">
    <property type="term" value="P:peptidoglycan biosynthetic process"/>
    <property type="evidence" value="ECO:0007669"/>
    <property type="project" value="UniProtKB-UniPathway"/>
</dbReference>
<dbReference type="GO" id="GO:0008360">
    <property type="term" value="P:regulation of cell shape"/>
    <property type="evidence" value="ECO:0007669"/>
    <property type="project" value="UniProtKB-KW"/>
</dbReference>
<dbReference type="CDD" id="cd16913">
    <property type="entry name" value="YkuD_like"/>
    <property type="match status" value="1"/>
</dbReference>
<dbReference type="Gene3D" id="2.40.440.10">
    <property type="entry name" value="L,D-transpeptidase catalytic domain-like"/>
    <property type="match status" value="1"/>
</dbReference>
<dbReference type="InterPro" id="IPR005490">
    <property type="entry name" value="LD_TPept_cat_dom"/>
</dbReference>
<dbReference type="InterPro" id="IPR038063">
    <property type="entry name" value="Transpep_catalytic_dom"/>
</dbReference>
<dbReference type="NCBIfam" id="NF040599">
    <property type="entry name" value="LdtF_DpaA_YafK"/>
    <property type="match status" value="1"/>
</dbReference>
<dbReference type="PANTHER" id="PTHR36699:SF1">
    <property type="entry name" value="L,D-TRANSPEPTIDASE YAFK-RELATED"/>
    <property type="match status" value="1"/>
</dbReference>
<dbReference type="PANTHER" id="PTHR36699">
    <property type="entry name" value="LD-TRANSPEPTIDASE"/>
    <property type="match status" value="1"/>
</dbReference>
<dbReference type="Pfam" id="PF03734">
    <property type="entry name" value="YkuD"/>
    <property type="match status" value="1"/>
</dbReference>
<dbReference type="SUPFAM" id="SSF141523">
    <property type="entry name" value="L,D-transpeptidase catalytic domain-like"/>
    <property type="match status" value="1"/>
</dbReference>
<dbReference type="PROSITE" id="PS52029">
    <property type="entry name" value="LD_TPASE"/>
    <property type="match status" value="1"/>
</dbReference>
<keyword id="KW-0133">Cell shape</keyword>
<keyword id="KW-0961">Cell wall biogenesis/degradation</keyword>
<keyword id="KW-0328">Glycosyltransferase</keyword>
<keyword id="KW-0378">Hydrolase</keyword>
<keyword id="KW-0573">Peptidoglycan synthesis</keyword>
<keyword id="KW-1185">Reference proteome</keyword>
<keyword id="KW-0732">Signal</keyword>
<keyword id="KW-0808">Transferase</keyword>
<reference key="1">
    <citation type="journal article" date="2001" name="Nature">
        <title>Genome sequence of enterohaemorrhagic Escherichia coli O157:H7.</title>
        <authorList>
            <person name="Perna N.T."/>
            <person name="Plunkett G. III"/>
            <person name="Burland V."/>
            <person name="Mau B."/>
            <person name="Glasner J.D."/>
            <person name="Rose D.J."/>
            <person name="Mayhew G.F."/>
            <person name="Evans P.S."/>
            <person name="Gregor J."/>
            <person name="Kirkpatrick H.A."/>
            <person name="Posfai G."/>
            <person name="Hackett J."/>
            <person name="Klink S."/>
            <person name="Boutin A."/>
            <person name="Shao Y."/>
            <person name="Miller L."/>
            <person name="Grotbeck E.J."/>
            <person name="Davis N.W."/>
            <person name="Lim A."/>
            <person name="Dimalanta E.T."/>
            <person name="Potamousis K."/>
            <person name="Apodaca J."/>
            <person name="Anantharaman T.S."/>
            <person name="Lin J."/>
            <person name="Yen G."/>
            <person name="Schwartz D.C."/>
            <person name="Welch R.A."/>
            <person name="Blattner F.R."/>
        </authorList>
    </citation>
    <scope>NUCLEOTIDE SEQUENCE [LARGE SCALE GENOMIC DNA]</scope>
    <source>
        <strain>O157:H7 / EDL933 / ATCC 700927 / EHEC</strain>
    </source>
</reference>
<reference key="2">
    <citation type="journal article" date="2001" name="DNA Res.">
        <title>Complete genome sequence of enterohemorrhagic Escherichia coli O157:H7 and genomic comparison with a laboratory strain K-12.</title>
        <authorList>
            <person name="Hayashi T."/>
            <person name="Makino K."/>
            <person name="Ohnishi M."/>
            <person name="Kurokawa K."/>
            <person name="Ishii K."/>
            <person name="Yokoyama K."/>
            <person name="Han C.-G."/>
            <person name="Ohtsubo E."/>
            <person name="Nakayama K."/>
            <person name="Murata T."/>
            <person name="Tanaka M."/>
            <person name="Tobe T."/>
            <person name="Iida T."/>
            <person name="Takami H."/>
            <person name="Honda T."/>
            <person name="Sasakawa C."/>
            <person name="Ogasawara N."/>
            <person name="Yasunaga T."/>
            <person name="Kuhara S."/>
            <person name="Shiba T."/>
            <person name="Hattori M."/>
            <person name="Shinagawa H."/>
        </authorList>
    </citation>
    <scope>NUCLEOTIDE SEQUENCE [LARGE SCALE GENOMIC DNA]</scope>
    <source>
        <strain>O157:H7 / Sakai / RIMD 0509952 / EHEC</strain>
    </source>
</reference>
<proteinExistence type="inferred from homology"/>
<organism>
    <name type="scientific">Escherichia coli O157:H7</name>
    <dbReference type="NCBI Taxonomy" id="83334"/>
    <lineage>
        <taxon>Bacteria</taxon>
        <taxon>Pseudomonadati</taxon>
        <taxon>Pseudomonadota</taxon>
        <taxon>Gammaproteobacteria</taxon>
        <taxon>Enterobacterales</taxon>
        <taxon>Enterobacteriaceae</taxon>
        <taxon>Escherichia</taxon>
    </lineage>
</organism>